<name>DTD_VIBVY</name>
<keyword id="KW-0963">Cytoplasm</keyword>
<keyword id="KW-0378">Hydrolase</keyword>
<keyword id="KW-0694">RNA-binding</keyword>
<keyword id="KW-0820">tRNA-binding</keyword>
<sequence>MIALIQRVSEAAVRVDGEVVGQIDKGLLVLLGVEKDDDEAKAKRLMERVTTYRVFEDSEGKMNLNVQQVDGKVLVVSQFTLPADTKKGTRAGFSRGAHPADAERLYDYFSDLCQQVLPTERGRFAADMKVSLINDGPVTFWLQV</sequence>
<feature type="chain" id="PRO_0000164619" description="D-aminoacyl-tRNA deacylase">
    <location>
        <begin position="1"/>
        <end position="144"/>
    </location>
</feature>
<feature type="short sequence motif" description="Gly-cisPro motif, important for rejection of L-amino acids" evidence="1">
    <location>
        <begin position="136"/>
        <end position="137"/>
    </location>
</feature>
<protein>
    <recommendedName>
        <fullName evidence="1">D-aminoacyl-tRNA deacylase</fullName>
        <shortName evidence="1">DTD</shortName>
        <ecNumber evidence="1">3.1.1.96</ecNumber>
    </recommendedName>
    <alternativeName>
        <fullName evidence="1">Gly-tRNA(Ala) deacylase</fullName>
    </alternativeName>
</protein>
<gene>
    <name evidence="1" type="primary">dtd</name>
    <name type="ordered locus">VV0204</name>
</gene>
<dbReference type="EC" id="3.1.1.96" evidence="1"/>
<dbReference type="EMBL" id="BA000037">
    <property type="protein sequence ID" value="BAC92968.1"/>
    <property type="molecule type" value="Genomic_DNA"/>
</dbReference>
<dbReference type="RefSeq" id="WP_011078951.1">
    <property type="nucleotide sequence ID" value="NC_005139.1"/>
</dbReference>
<dbReference type="SMR" id="Q7MQ06"/>
<dbReference type="STRING" id="672.VV93_v1c01890"/>
<dbReference type="KEGG" id="vvy:VV0204"/>
<dbReference type="eggNOG" id="COG1490">
    <property type="taxonomic scope" value="Bacteria"/>
</dbReference>
<dbReference type="HOGENOM" id="CLU_076901_1_1_6"/>
<dbReference type="Proteomes" id="UP000002675">
    <property type="component" value="Chromosome I"/>
</dbReference>
<dbReference type="GO" id="GO:0005737">
    <property type="term" value="C:cytoplasm"/>
    <property type="evidence" value="ECO:0007669"/>
    <property type="project" value="UniProtKB-SubCell"/>
</dbReference>
<dbReference type="GO" id="GO:0051500">
    <property type="term" value="F:D-tyrosyl-tRNA(Tyr) deacylase activity"/>
    <property type="evidence" value="ECO:0007669"/>
    <property type="project" value="TreeGrafter"/>
</dbReference>
<dbReference type="GO" id="GO:0106026">
    <property type="term" value="F:Gly-tRNA(Ala) deacylase activity"/>
    <property type="evidence" value="ECO:0007669"/>
    <property type="project" value="UniProtKB-UniRule"/>
</dbReference>
<dbReference type="GO" id="GO:0043908">
    <property type="term" value="F:Ser(Gly)-tRNA(Ala) hydrolase activity"/>
    <property type="evidence" value="ECO:0007669"/>
    <property type="project" value="UniProtKB-UniRule"/>
</dbReference>
<dbReference type="GO" id="GO:0000049">
    <property type="term" value="F:tRNA binding"/>
    <property type="evidence" value="ECO:0007669"/>
    <property type="project" value="UniProtKB-UniRule"/>
</dbReference>
<dbReference type="GO" id="GO:0019478">
    <property type="term" value="P:D-amino acid catabolic process"/>
    <property type="evidence" value="ECO:0007669"/>
    <property type="project" value="UniProtKB-UniRule"/>
</dbReference>
<dbReference type="CDD" id="cd00563">
    <property type="entry name" value="Dtyr_deacylase"/>
    <property type="match status" value="1"/>
</dbReference>
<dbReference type="FunFam" id="3.50.80.10:FF:000001">
    <property type="entry name" value="D-aminoacyl-tRNA deacylase"/>
    <property type="match status" value="1"/>
</dbReference>
<dbReference type="Gene3D" id="3.50.80.10">
    <property type="entry name" value="D-tyrosyl-tRNA(Tyr) deacylase"/>
    <property type="match status" value="1"/>
</dbReference>
<dbReference type="HAMAP" id="MF_00518">
    <property type="entry name" value="Deacylase_Dtd"/>
    <property type="match status" value="1"/>
</dbReference>
<dbReference type="InterPro" id="IPR003732">
    <property type="entry name" value="Daa-tRNA_deacyls_DTD"/>
</dbReference>
<dbReference type="InterPro" id="IPR023509">
    <property type="entry name" value="DTD-like_sf"/>
</dbReference>
<dbReference type="NCBIfam" id="TIGR00256">
    <property type="entry name" value="D-aminoacyl-tRNA deacylase"/>
    <property type="match status" value="1"/>
</dbReference>
<dbReference type="PANTHER" id="PTHR10472:SF5">
    <property type="entry name" value="D-AMINOACYL-TRNA DEACYLASE 1"/>
    <property type="match status" value="1"/>
</dbReference>
<dbReference type="PANTHER" id="PTHR10472">
    <property type="entry name" value="D-TYROSYL-TRNA TYR DEACYLASE"/>
    <property type="match status" value="1"/>
</dbReference>
<dbReference type="Pfam" id="PF02580">
    <property type="entry name" value="Tyr_Deacylase"/>
    <property type="match status" value="1"/>
</dbReference>
<dbReference type="SUPFAM" id="SSF69500">
    <property type="entry name" value="DTD-like"/>
    <property type="match status" value="1"/>
</dbReference>
<organism>
    <name type="scientific">Vibrio vulnificus (strain YJ016)</name>
    <dbReference type="NCBI Taxonomy" id="196600"/>
    <lineage>
        <taxon>Bacteria</taxon>
        <taxon>Pseudomonadati</taxon>
        <taxon>Pseudomonadota</taxon>
        <taxon>Gammaproteobacteria</taxon>
        <taxon>Vibrionales</taxon>
        <taxon>Vibrionaceae</taxon>
        <taxon>Vibrio</taxon>
    </lineage>
</organism>
<evidence type="ECO:0000255" key="1">
    <source>
        <dbReference type="HAMAP-Rule" id="MF_00518"/>
    </source>
</evidence>
<proteinExistence type="inferred from homology"/>
<comment type="function">
    <text evidence="1">An aminoacyl-tRNA editing enzyme that deacylates mischarged D-aminoacyl-tRNAs. Also deacylates mischarged glycyl-tRNA(Ala), protecting cells against glycine mischarging by AlaRS. Acts via tRNA-based rather than protein-based catalysis; rejects L-amino acids rather than detecting D-amino acids in the active site. By recycling D-aminoacyl-tRNA to D-amino acids and free tRNA molecules, this enzyme counteracts the toxicity associated with the formation of D-aminoacyl-tRNA entities in vivo and helps enforce protein L-homochirality.</text>
</comment>
<comment type="catalytic activity">
    <reaction evidence="1">
        <text>glycyl-tRNA(Ala) + H2O = tRNA(Ala) + glycine + H(+)</text>
        <dbReference type="Rhea" id="RHEA:53744"/>
        <dbReference type="Rhea" id="RHEA-COMP:9657"/>
        <dbReference type="Rhea" id="RHEA-COMP:13640"/>
        <dbReference type="ChEBI" id="CHEBI:15377"/>
        <dbReference type="ChEBI" id="CHEBI:15378"/>
        <dbReference type="ChEBI" id="CHEBI:57305"/>
        <dbReference type="ChEBI" id="CHEBI:78442"/>
        <dbReference type="ChEBI" id="CHEBI:78522"/>
        <dbReference type="EC" id="3.1.1.96"/>
    </reaction>
</comment>
<comment type="catalytic activity">
    <reaction evidence="1">
        <text>a D-aminoacyl-tRNA + H2O = a tRNA + a D-alpha-amino acid + H(+)</text>
        <dbReference type="Rhea" id="RHEA:13953"/>
        <dbReference type="Rhea" id="RHEA-COMP:10123"/>
        <dbReference type="Rhea" id="RHEA-COMP:10124"/>
        <dbReference type="ChEBI" id="CHEBI:15377"/>
        <dbReference type="ChEBI" id="CHEBI:15378"/>
        <dbReference type="ChEBI" id="CHEBI:59871"/>
        <dbReference type="ChEBI" id="CHEBI:78442"/>
        <dbReference type="ChEBI" id="CHEBI:79333"/>
        <dbReference type="EC" id="3.1.1.96"/>
    </reaction>
</comment>
<comment type="subunit">
    <text evidence="1">Homodimer.</text>
</comment>
<comment type="subcellular location">
    <subcellularLocation>
        <location evidence="1">Cytoplasm</location>
    </subcellularLocation>
</comment>
<comment type="domain">
    <text evidence="1">A Gly-cisPro motif from one monomer fits into the active site of the other monomer to allow specific chiral rejection of L-amino acids.</text>
</comment>
<comment type="similarity">
    <text evidence="1">Belongs to the DTD family.</text>
</comment>
<reference key="1">
    <citation type="journal article" date="2003" name="Genome Res.">
        <title>Comparative genome analysis of Vibrio vulnificus, a marine pathogen.</title>
        <authorList>
            <person name="Chen C.-Y."/>
            <person name="Wu K.-M."/>
            <person name="Chang Y.-C."/>
            <person name="Chang C.-H."/>
            <person name="Tsai H.-C."/>
            <person name="Liao T.-L."/>
            <person name="Liu Y.-M."/>
            <person name="Chen H.-J."/>
            <person name="Shen A.B.-T."/>
            <person name="Li J.-C."/>
            <person name="Su T.-L."/>
            <person name="Shao C.-P."/>
            <person name="Lee C.-T."/>
            <person name="Hor L.-I."/>
            <person name="Tsai S.-F."/>
        </authorList>
    </citation>
    <scope>NUCLEOTIDE SEQUENCE [LARGE SCALE GENOMIC DNA]</scope>
    <source>
        <strain>YJ016</strain>
    </source>
</reference>
<accession>Q7MQ06</accession>